<dbReference type="PIR" id="A37369">
    <property type="entry name" value="HRTHM"/>
</dbReference>
<dbReference type="PDB" id="1A7D">
    <property type="method" value="X-ray"/>
    <property type="resolution" value="1.80 A"/>
    <property type="chains" value="A=1-118"/>
</dbReference>
<dbReference type="PDB" id="1A7E">
    <property type="method" value="X-ray"/>
    <property type="resolution" value="1.80 A"/>
    <property type="chains" value="A=1-118"/>
</dbReference>
<dbReference type="PDB" id="2IGF">
    <property type="method" value="X-ray"/>
    <property type="resolution" value="2.80 A"/>
    <property type="chains" value="P=69-87"/>
</dbReference>
<dbReference type="PDB" id="2MHR">
    <property type="method" value="X-ray"/>
    <property type="resolution" value="1.30 A"/>
    <property type="chains" value="A=1-118"/>
</dbReference>
<dbReference type="PDBsum" id="1A7D"/>
<dbReference type="PDBsum" id="1A7E"/>
<dbReference type="PDBsum" id="2IGF"/>
<dbReference type="PDBsum" id="2MHR"/>
<dbReference type="SMR" id="P02247"/>
<dbReference type="ABCD" id="P02247">
    <property type="antibodies" value="1 sequenced antibody"/>
</dbReference>
<dbReference type="EvolutionaryTrace" id="P02247"/>
<dbReference type="GO" id="GO:0005506">
    <property type="term" value="F:iron ion binding"/>
    <property type="evidence" value="ECO:0007669"/>
    <property type="project" value="InterPro"/>
</dbReference>
<dbReference type="GO" id="GO:0005344">
    <property type="term" value="F:oxygen carrier activity"/>
    <property type="evidence" value="ECO:0007669"/>
    <property type="project" value="UniProtKB-KW"/>
</dbReference>
<dbReference type="CDD" id="cd12107">
    <property type="entry name" value="Hemerythrin"/>
    <property type="match status" value="1"/>
</dbReference>
<dbReference type="Gene3D" id="1.20.120.50">
    <property type="entry name" value="Hemerythrin-like"/>
    <property type="match status" value="1"/>
</dbReference>
<dbReference type="InterPro" id="IPR002063">
    <property type="entry name" value="Haemerythrin"/>
</dbReference>
<dbReference type="InterPro" id="IPR016131">
    <property type="entry name" value="Haemerythrin_Fe_BS"/>
</dbReference>
<dbReference type="InterPro" id="IPR050669">
    <property type="entry name" value="Hemerythrin"/>
</dbReference>
<dbReference type="InterPro" id="IPR012312">
    <property type="entry name" value="Hemerythrin-like"/>
</dbReference>
<dbReference type="InterPro" id="IPR035938">
    <property type="entry name" value="Hemerythrin-like_sf"/>
</dbReference>
<dbReference type="InterPro" id="IPR012827">
    <property type="entry name" value="Hemerythrin_metal-bd"/>
</dbReference>
<dbReference type="NCBIfam" id="TIGR02481">
    <property type="entry name" value="hemeryth_dom"/>
    <property type="match status" value="1"/>
</dbReference>
<dbReference type="NCBIfam" id="TIGR00058">
    <property type="entry name" value="Hemerythrin"/>
    <property type="match status" value="1"/>
</dbReference>
<dbReference type="PANTHER" id="PTHR37164">
    <property type="entry name" value="BACTERIOHEMERYTHRIN"/>
    <property type="match status" value="1"/>
</dbReference>
<dbReference type="PANTHER" id="PTHR37164:SF1">
    <property type="entry name" value="BACTERIOHEMERYTHRIN"/>
    <property type="match status" value="1"/>
</dbReference>
<dbReference type="Pfam" id="PF01814">
    <property type="entry name" value="Hemerythrin"/>
    <property type="match status" value="1"/>
</dbReference>
<dbReference type="PIRSF" id="PIRSF002033">
    <property type="entry name" value="Hemerythrin"/>
    <property type="match status" value="1"/>
</dbReference>
<dbReference type="PRINTS" id="PR00186">
    <property type="entry name" value="HEMERYTHRIN"/>
</dbReference>
<dbReference type="SUPFAM" id="SSF47188">
    <property type="entry name" value="Hemerythrin-like"/>
    <property type="match status" value="1"/>
</dbReference>
<dbReference type="PROSITE" id="PS00550">
    <property type="entry name" value="HEMERYTHRINS"/>
    <property type="match status" value="1"/>
</dbReference>
<evidence type="ECO:0000250" key="1">
    <source>
        <dbReference type="UniProtKB" id="Q60AX2"/>
    </source>
</evidence>
<evidence type="ECO:0000269" key="2">
    <source>
    </source>
</evidence>
<evidence type="ECO:0000305" key="3"/>
<evidence type="ECO:0007744" key="4">
    <source>
        <dbReference type="PDB" id="2MHR"/>
    </source>
</evidence>
<evidence type="ECO:0007829" key="5">
    <source>
        <dbReference type="PDB" id="2MHR"/>
    </source>
</evidence>
<protein>
    <recommendedName>
        <fullName>Myohemerythrin</fullName>
        <shortName>MHr</shortName>
    </recommendedName>
</protein>
<proteinExistence type="evidence at protein level"/>
<reference key="1">
    <citation type="journal article" date="1976" name="Biochemistry">
        <title>The primary structure of myohemerythrin.</title>
        <authorList>
            <person name="Klippenstein G.L."/>
            <person name="Cote J.L."/>
            <person name="Ludlam S.E."/>
        </authorList>
    </citation>
    <scope>PROTEIN SEQUENCE</scope>
</reference>
<reference key="2">
    <citation type="journal article" date="1975" name="Proc. Natl. Acad. Sci. U.S.A.">
        <title>Tertiary structure of myohemerythrin at low resolution.</title>
        <authorList>
            <person name="Hendrickson W.A."/>
            <person name="Klippenstein G.L."/>
            <person name="Ward K.B."/>
        </authorList>
    </citation>
    <scope>X-RAY CRYSTALLOGRAPHY (5.5 ANGSTROMS)</scope>
</reference>
<reference key="3">
    <citation type="journal article" date="1977" name="J. Biol. Chem.">
        <title>Pseudosymmetry in the structure of myohemerythrin.</title>
        <authorList>
            <person name="Hendrickson W.A."/>
            <person name="Ward K.B."/>
        </authorList>
    </citation>
    <scope>X-RAY CRYSTALLOGRAPHY (5.0 ANGSTROMS)</scope>
</reference>
<reference key="4">
    <citation type="journal article" date="1987" name="J. Mol. Biol.">
        <title>Structure of myohemerythrin in the azidomet state at 1.7/1.3-A resolution.</title>
        <authorList>
            <person name="Sheriff S."/>
            <person name="Hendrickson W.A."/>
            <person name="Smith J.L."/>
        </authorList>
    </citation>
    <scope>X-RAY CRYSTALLOGRAPHY (1.30 ANGSTROMS) IN COMPLEX WITH IRON</scope>
    <scope>SEQUENCE REVISION TO 34-35</scope>
</reference>
<reference key="5">
    <citation type="journal article" date="1997" name="Biochemistry">
        <title>Structures of wild-type chloromet and L103N hydroxomet Themiste zostericola myohemerythrins at 1.8-A resolution.</title>
        <authorList>
            <person name="Martins L.J."/>
            <person name="Hill C.P."/>
            <person name="Ellis W.R. Jr."/>
        </authorList>
    </citation>
    <scope>X-RAY CRYSTALLOGRAPHY (1.8 ANGSTROMS)</scope>
</reference>
<name>HEMTM_THEHE</name>
<organism>
    <name type="scientific">Themiste hennahi</name>
    <name type="common">Peanut worm</name>
    <name type="synonym">Themiste zostericola</name>
    <dbReference type="NCBI Taxonomy" id="360549"/>
    <lineage>
        <taxon>Eukaryota</taxon>
        <taxon>Metazoa</taxon>
        <taxon>Spiralia</taxon>
        <taxon>Lophotrochozoa</taxon>
        <taxon>Annelida</taxon>
        <taxon>Sipuncula</taxon>
        <taxon>Sipunculidea</taxon>
        <taxon>Golfingiida</taxon>
        <taxon>Themistidae</taxon>
        <taxon>Themiste</taxon>
    </lineage>
</organism>
<accession>P02247</accession>
<feature type="chain" id="PRO_0000191842" description="Myohemerythrin">
    <location>
        <begin position="1"/>
        <end position="118"/>
    </location>
</feature>
<feature type="binding site" evidence="2 4">
    <location>
        <position position="25"/>
    </location>
    <ligand>
        <name>Fe cation</name>
        <dbReference type="ChEBI" id="CHEBI:24875"/>
        <label>1</label>
    </ligand>
</feature>
<feature type="binding site" evidence="2 4">
    <location>
        <position position="54"/>
    </location>
    <ligand>
        <name>Fe cation</name>
        <dbReference type="ChEBI" id="CHEBI:24875"/>
        <label>1</label>
    </ligand>
</feature>
<feature type="binding site" evidence="2 4">
    <location>
        <position position="58"/>
    </location>
    <ligand>
        <name>Fe cation</name>
        <dbReference type="ChEBI" id="CHEBI:24875"/>
        <label>1</label>
    </ligand>
</feature>
<feature type="binding site" evidence="2 4">
    <location>
        <position position="58"/>
    </location>
    <ligand>
        <name>Fe cation</name>
        <dbReference type="ChEBI" id="CHEBI:24875"/>
        <label>2</label>
    </ligand>
</feature>
<feature type="binding site" evidence="2 4">
    <location>
        <position position="73"/>
    </location>
    <ligand>
        <name>Fe cation</name>
        <dbReference type="ChEBI" id="CHEBI:24875"/>
        <label>2</label>
    </ligand>
</feature>
<feature type="binding site" evidence="2 4">
    <location>
        <position position="77"/>
    </location>
    <ligand>
        <name>Fe cation</name>
        <dbReference type="ChEBI" id="CHEBI:24875"/>
        <label>2</label>
    </ligand>
</feature>
<feature type="binding site" evidence="2 4">
    <location>
        <position position="106"/>
    </location>
    <ligand>
        <name>Fe cation</name>
        <dbReference type="ChEBI" id="CHEBI:24875"/>
        <label>2</label>
    </ligand>
</feature>
<feature type="binding site" evidence="2 4">
    <location>
        <position position="111"/>
    </location>
    <ligand>
        <name>Fe cation</name>
        <dbReference type="ChEBI" id="CHEBI:24875"/>
        <label>1</label>
    </ligand>
</feature>
<feature type="binding site" evidence="2 4">
    <location>
        <position position="111"/>
    </location>
    <ligand>
        <name>Fe cation</name>
        <dbReference type="ChEBI" id="CHEBI:24875"/>
        <label>2</label>
    </ligand>
</feature>
<feature type="helix" evidence="5">
    <location>
        <begin position="12"/>
        <end position="14"/>
    </location>
</feature>
<feature type="helix" evidence="5">
    <location>
        <begin position="19"/>
        <end position="37"/>
    </location>
</feature>
<feature type="helix" evidence="5">
    <location>
        <begin position="41"/>
        <end position="64"/>
    </location>
</feature>
<feature type="helix" evidence="5">
    <location>
        <begin position="70"/>
        <end position="85"/>
    </location>
</feature>
<feature type="helix" evidence="5">
    <location>
        <begin position="93"/>
        <end position="109"/>
    </location>
</feature>
<feature type="helix" evidence="5">
    <location>
        <begin position="111"/>
        <end position="114"/>
    </location>
</feature>
<feature type="turn" evidence="5">
    <location>
        <begin position="115"/>
        <end position="117"/>
    </location>
</feature>
<comment type="function">
    <text>Myohemerythrin is an oxygen-binding protein found in the retractor muscles of certain worms. The oxygen-binding site contains two iron atoms.</text>
</comment>
<comment type="subunit">
    <text evidence="1">Monomer.</text>
</comment>
<comment type="tissue specificity">
    <text>Muscle.</text>
</comment>
<comment type="similarity">
    <text evidence="3">Belongs to the hemerythrin family.</text>
</comment>
<sequence>GWEIPEPYVWDESFRVFYEQLDEEHKKIFKGIFDCIRDNSAPNLATLVKVTTNHFTHEEAMMDAAKYSEVVPHKKMHKDFLEKIGGLSAPVDAKNVDYCKEWLVNHIKGTDFKYKGKL</sequence>
<keyword id="KW-0002">3D-structure</keyword>
<keyword id="KW-0903">Direct protein sequencing</keyword>
<keyword id="KW-0408">Iron</keyword>
<keyword id="KW-0479">Metal-binding</keyword>
<keyword id="KW-0514">Muscle protein</keyword>
<keyword id="KW-0561">Oxygen transport</keyword>
<keyword id="KW-0813">Transport</keyword>